<feature type="chain" id="PRO_0000174820" description="Co-chaperonin GroES 5">
    <location>
        <begin position="1"/>
        <end position="104"/>
    </location>
</feature>
<feature type="sequence conflict" description="In Ref. 1; AAA26286." evidence="2" ref="1">
    <original>AEKIAA</original>
    <variation>PRR</variation>
    <location>
        <begin position="99"/>
        <end position="104"/>
    </location>
</feature>
<gene>
    <name evidence="1" type="primary">groES5</name>
    <name type="synonym">groES-C</name>
    <name evidence="1" type="synonym">groS5</name>
    <name type="ordered locus">RB1006.1</name>
</gene>
<name>CH105_RHIME</name>
<sequence>MAFRPLHDRILVRRVESEEKTKGGIIIPDTAKEKPQEGEVLAVGPGARGEQGQIQPLDVKVGDRILFGKWSGTEIKIDGEDLLIMKESDVMGIIEARAAEKIAA</sequence>
<organism>
    <name type="scientific">Rhizobium meliloti (strain 1021)</name>
    <name type="common">Ensifer meliloti</name>
    <name type="synonym">Sinorhizobium meliloti</name>
    <dbReference type="NCBI Taxonomy" id="266834"/>
    <lineage>
        <taxon>Bacteria</taxon>
        <taxon>Pseudomonadati</taxon>
        <taxon>Pseudomonadota</taxon>
        <taxon>Alphaproteobacteria</taxon>
        <taxon>Hyphomicrobiales</taxon>
        <taxon>Rhizobiaceae</taxon>
        <taxon>Sinorhizobium/Ensifer group</taxon>
        <taxon>Sinorhizobium</taxon>
    </lineage>
</organism>
<accession>P35474</accession>
<proteinExistence type="evidence at transcript level"/>
<keyword id="KW-0143">Chaperone</keyword>
<keyword id="KW-0963">Cytoplasm</keyword>
<keyword id="KW-0614">Plasmid</keyword>
<keyword id="KW-1185">Reference proteome</keyword>
<keyword id="KW-0346">Stress response</keyword>
<reference key="1">
    <citation type="journal article" date="1993" name="Gene">
        <title>Cloning and characterization of multiple groEL chaperonin-encoding genes in Rhizobium meliloti.</title>
        <authorList>
            <person name="Rusanganwa E."/>
            <person name="Gupta R.S."/>
        </authorList>
    </citation>
    <scope>NUCLEOTIDE SEQUENCE [GENOMIC DNA]</scope>
    <source>
        <strain>1021</strain>
    </source>
</reference>
<reference key="2">
    <citation type="journal article" date="2001" name="Proc. Natl. Acad. Sci. U.S.A.">
        <title>The complete sequence of the 1,683-kb pSymB megaplasmid from the N2-fixing endosymbiont Sinorhizobium meliloti.</title>
        <authorList>
            <person name="Finan T.M."/>
            <person name="Weidner S."/>
            <person name="Wong K."/>
            <person name="Buhrmester J."/>
            <person name="Chain P."/>
            <person name="Vorhoelter F.J."/>
            <person name="Hernandez-Lucas I."/>
            <person name="Becker A."/>
            <person name="Cowie A."/>
            <person name="Gouzy J."/>
            <person name="Golding B."/>
            <person name="Puehler A."/>
        </authorList>
    </citation>
    <scope>NUCLEOTIDE SEQUENCE [LARGE SCALE GENOMIC DNA]</scope>
    <source>
        <strain>1021</strain>
    </source>
</reference>
<reference key="3">
    <citation type="journal article" date="2001" name="Science">
        <title>The composite genome of the legume symbiont Sinorhizobium meliloti.</title>
        <authorList>
            <person name="Galibert F."/>
            <person name="Finan T.M."/>
            <person name="Long S.R."/>
            <person name="Puehler A."/>
            <person name="Abola P."/>
            <person name="Ampe F."/>
            <person name="Barloy-Hubler F."/>
            <person name="Barnett M.J."/>
            <person name="Becker A."/>
            <person name="Boistard P."/>
            <person name="Bothe G."/>
            <person name="Boutry M."/>
            <person name="Bowser L."/>
            <person name="Buhrmester J."/>
            <person name="Cadieu E."/>
            <person name="Capela D."/>
            <person name="Chain P."/>
            <person name="Cowie A."/>
            <person name="Davis R.W."/>
            <person name="Dreano S."/>
            <person name="Federspiel N.A."/>
            <person name="Fisher R.F."/>
            <person name="Gloux S."/>
            <person name="Godrie T."/>
            <person name="Goffeau A."/>
            <person name="Golding B."/>
            <person name="Gouzy J."/>
            <person name="Gurjal M."/>
            <person name="Hernandez-Lucas I."/>
            <person name="Hong A."/>
            <person name="Huizar L."/>
            <person name="Hyman R.W."/>
            <person name="Jones T."/>
            <person name="Kahn D."/>
            <person name="Kahn M.L."/>
            <person name="Kalman S."/>
            <person name="Keating D.H."/>
            <person name="Kiss E."/>
            <person name="Komp C."/>
            <person name="Lelaure V."/>
            <person name="Masuy D."/>
            <person name="Palm C."/>
            <person name="Peck M.C."/>
            <person name="Pohl T.M."/>
            <person name="Portetelle D."/>
            <person name="Purnelle B."/>
            <person name="Ramsperger U."/>
            <person name="Surzycki R."/>
            <person name="Thebault P."/>
            <person name="Vandenbol M."/>
            <person name="Vorhoelter F.J."/>
            <person name="Weidner S."/>
            <person name="Wells D.H."/>
            <person name="Wong K."/>
            <person name="Yeh K.-C."/>
            <person name="Batut J."/>
        </authorList>
    </citation>
    <scope>NUCLEOTIDE SEQUENCE [LARGE SCALE GENOMIC DNA]</scope>
    <source>
        <strain>1021</strain>
    </source>
</reference>
<dbReference type="EMBL" id="M94191">
    <property type="protein sequence ID" value="AAA26286.1"/>
    <property type="molecule type" value="Genomic_DNA"/>
</dbReference>
<dbReference type="EMBL" id="AL591985">
    <property type="status" value="NOT_ANNOTATED_CDS"/>
    <property type="molecule type" value="Genomic_DNA"/>
</dbReference>
<dbReference type="PIR" id="JN0513">
    <property type="entry name" value="JN0513"/>
</dbReference>
<dbReference type="RefSeq" id="YP_002122333.1">
    <property type="nucleotide sequence ID" value="NC_003078.1"/>
</dbReference>
<dbReference type="SMR" id="P35474"/>
<dbReference type="eggNOG" id="COG0234">
    <property type="taxonomic scope" value="Bacteria"/>
</dbReference>
<dbReference type="OrthoDB" id="9806791at2"/>
<dbReference type="Proteomes" id="UP000001976">
    <property type="component" value="Plasmid pSymB"/>
</dbReference>
<dbReference type="GO" id="GO:0005737">
    <property type="term" value="C:cytoplasm"/>
    <property type="evidence" value="ECO:0007669"/>
    <property type="project" value="UniProtKB-SubCell"/>
</dbReference>
<dbReference type="GO" id="GO:0005524">
    <property type="term" value="F:ATP binding"/>
    <property type="evidence" value="ECO:0007669"/>
    <property type="project" value="InterPro"/>
</dbReference>
<dbReference type="GO" id="GO:0046872">
    <property type="term" value="F:metal ion binding"/>
    <property type="evidence" value="ECO:0007669"/>
    <property type="project" value="TreeGrafter"/>
</dbReference>
<dbReference type="GO" id="GO:0044183">
    <property type="term" value="F:protein folding chaperone"/>
    <property type="evidence" value="ECO:0007669"/>
    <property type="project" value="InterPro"/>
</dbReference>
<dbReference type="GO" id="GO:0051087">
    <property type="term" value="F:protein-folding chaperone binding"/>
    <property type="evidence" value="ECO:0007669"/>
    <property type="project" value="TreeGrafter"/>
</dbReference>
<dbReference type="GO" id="GO:0051082">
    <property type="term" value="F:unfolded protein binding"/>
    <property type="evidence" value="ECO:0007669"/>
    <property type="project" value="TreeGrafter"/>
</dbReference>
<dbReference type="GO" id="GO:0051085">
    <property type="term" value="P:chaperone cofactor-dependent protein refolding"/>
    <property type="evidence" value="ECO:0007669"/>
    <property type="project" value="TreeGrafter"/>
</dbReference>
<dbReference type="CDD" id="cd00320">
    <property type="entry name" value="cpn10"/>
    <property type="match status" value="1"/>
</dbReference>
<dbReference type="FunFam" id="2.30.33.40:FF:000001">
    <property type="entry name" value="10 kDa chaperonin"/>
    <property type="match status" value="1"/>
</dbReference>
<dbReference type="Gene3D" id="2.30.33.40">
    <property type="entry name" value="GroES chaperonin"/>
    <property type="match status" value="1"/>
</dbReference>
<dbReference type="HAMAP" id="MF_00580">
    <property type="entry name" value="CH10"/>
    <property type="match status" value="1"/>
</dbReference>
<dbReference type="InterPro" id="IPR020818">
    <property type="entry name" value="Chaperonin_GroES"/>
</dbReference>
<dbReference type="InterPro" id="IPR037124">
    <property type="entry name" value="Chaperonin_GroES_sf"/>
</dbReference>
<dbReference type="InterPro" id="IPR018369">
    <property type="entry name" value="Chaprnonin_Cpn10_CS"/>
</dbReference>
<dbReference type="InterPro" id="IPR011032">
    <property type="entry name" value="GroES-like_sf"/>
</dbReference>
<dbReference type="NCBIfam" id="NF001527">
    <property type="entry name" value="PRK00364.1-2"/>
    <property type="match status" value="1"/>
</dbReference>
<dbReference type="NCBIfam" id="NF001529">
    <property type="entry name" value="PRK00364.1-5"/>
    <property type="match status" value="1"/>
</dbReference>
<dbReference type="NCBIfam" id="NF001531">
    <property type="entry name" value="PRK00364.2-2"/>
    <property type="match status" value="1"/>
</dbReference>
<dbReference type="NCBIfam" id="NF001533">
    <property type="entry name" value="PRK00364.2-4"/>
    <property type="match status" value="1"/>
</dbReference>
<dbReference type="NCBIfam" id="NF001534">
    <property type="entry name" value="PRK00364.2-5"/>
    <property type="match status" value="1"/>
</dbReference>
<dbReference type="PANTHER" id="PTHR10772">
    <property type="entry name" value="10 KDA HEAT SHOCK PROTEIN"/>
    <property type="match status" value="1"/>
</dbReference>
<dbReference type="PANTHER" id="PTHR10772:SF58">
    <property type="entry name" value="CO-CHAPERONIN GROES"/>
    <property type="match status" value="1"/>
</dbReference>
<dbReference type="Pfam" id="PF00166">
    <property type="entry name" value="Cpn10"/>
    <property type="match status" value="1"/>
</dbReference>
<dbReference type="PRINTS" id="PR00297">
    <property type="entry name" value="CHAPERONIN10"/>
</dbReference>
<dbReference type="SMART" id="SM00883">
    <property type="entry name" value="Cpn10"/>
    <property type="match status" value="1"/>
</dbReference>
<dbReference type="SUPFAM" id="SSF50129">
    <property type="entry name" value="GroES-like"/>
    <property type="match status" value="1"/>
</dbReference>
<dbReference type="PROSITE" id="PS00681">
    <property type="entry name" value="CHAPERONINS_CPN10"/>
    <property type="match status" value="1"/>
</dbReference>
<geneLocation type="plasmid">
    <name>pSymB</name>
    <name>megaplasmid 2</name>
</geneLocation>
<comment type="function">
    <text evidence="1">Together with the chaperonin GroEL, plays an essential role in assisting protein folding. The GroEL-GroES system forms a nano-cage that allows encapsulation of the non-native substrate proteins and provides a physical environment optimized to promote and accelerate protein folding. GroES binds to the apical surface of the GroEL ring, thereby capping the opening of the GroEL channel.</text>
</comment>
<comment type="subunit">
    <text evidence="1">Heptamer of 7 subunits arranged in a ring. Interacts with the chaperonin GroEL.</text>
</comment>
<comment type="subcellular location">
    <subcellularLocation>
        <location evidence="1">Cytoplasm</location>
    </subcellularLocation>
</comment>
<comment type="induction">
    <text>By heat shock.</text>
</comment>
<comment type="similarity">
    <text evidence="1 2">Belongs to the GroES chaperonin family.</text>
</comment>
<protein>
    <recommendedName>
        <fullName evidence="1">Co-chaperonin GroES 5</fullName>
    </recommendedName>
    <alternativeName>
        <fullName evidence="1">10 kDa chaperonin 5</fullName>
    </alternativeName>
    <alternativeName>
        <fullName evidence="1">Chaperonin-10 5</fullName>
        <shortName evidence="1">Cpn10 5</shortName>
    </alternativeName>
</protein>
<evidence type="ECO:0000255" key="1">
    <source>
        <dbReference type="HAMAP-Rule" id="MF_00580"/>
    </source>
</evidence>
<evidence type="ECO:0000305" key="2"/>